<protein>
    <recommendedName>
        <fullName evidence="1">ATP-dependent protease ATPase subunit HslU</fullName>
    </recommendedName>
    <alternativeName>
        <fullName evidence="1">Unfoldase HslU</fullName>
    </alternativeName>
</protein>
<feature type="chain" id="PRO_0000160537" description="ATP-dependent protease ATPase subunit HslU">
    <location>
        <begin position="1"/>
        <end position="433"/>
    </location>
</feature>
<feature type="binding site" evidence="1">
    <location>
        <position position="18"/>
    </location>
    <ligand>
        <name>ATP</name>
        <dbReference type="ChEBI" id="CHEBI:30616"/>
    </ligand>
</feature>
<feature type="binding site" evidence="1">
    <location>
        <begin position="60"/>
        <end position="65"/>
    </location>
    <ligand>
        <name>ATP</name>
        <dbReference type="ChEBI" id="CHEBI:30616"/>
    </ligand>
</feature>
<feature type="binding site" evidence="1">
    <location>
        <position position="246"/>
    </location>
    <ligand>
        <name>ATP</name>
        <dbReference type="ChEBI" id="CHEBI:30616"/>
    </ligand>
</feature>
<feature type="binding site" evidence="1">
    <location>
        <position position="311"/>
    </location>
    <ligand>
        <name>ATP</name>
        <dbReference type="ChEBI" id="CHEBI:30616"/>
    </ligand>
</feature>
<feature type="binding site" evidence="1">
    <location>
        <position position="383"/>
    </location>
    <ligand>
        <name>ATP</name>
        <dbReference type="ChEBI" id="CHEBI:30616"/>
    </ligand>
</feature>
<keyword id="KW-0067">ATP-binding</keyword>
<keyword id="KW-0143">Chaperone</keyword>
<keyword id="KW-0963">Cytoplasm</keyword>
<keyword id="KW-0547">Nucleotide-binding</keyword>
<evidence type="ECO:0000255" key="1">
    <source>
        <dbReference type="HAMAP-Rule" id="MF_00249"/>
    </source>
</evidence>
<accession>Q6ND03</accession>
<dbReference type="EMBL" id="BX572593">
    <property type="protein sequence ID" value="CAE25750.1"/>
    <property type="molecule type" value="Genomic_DNA"/>
</dbReference>
<dbReference type="RefSeq" id="WP_011155874.1">
    <property type="nucleotide sequence ID" value="NZ_CP116810.1"/>
</dbReference>
<dbReference type="SMR" id="Q6ND03"/>
<dbReference type="STRING" id="258594.RPA0306"/>
<dbReference type="GeneID" id="66891316"/>
<dbReference type="eggNOG" id="COG1220">
    <property type="taxonomic scope" value="Bacteria"/>
</dbReference>
<dbReference type="HOGENOM" id="CLU_033123_0_0_5"/>
<dbReference type="PhylomeDB" id="Q6ND03"/>
<dbReference type="GO" id="GO:0009376">
    <property type="term" value="C:HslUV protease complex"/>
    <property type="evidence" value="ECO:0007669"/>
    <property type="project" value="UniProtKB-UniRule"/>
</dbReference>
<dbReference type="GO" id="GO:0005524">
    <property type="term" value="F:ATP binding"/>
    <property type="evidence" value="ECO:0007669"/>
    <property type="project" value="UniProtKB-UniRule"/>
</dbReference>
<dbReference type="GO" id="GO:0016887">
    <property type="term" value="F:ATP hydrolysis activity"/>
    <property type="evidence" value="ECO:0007669"/>
    <property type="project" value="InterPro"/>
</dbReference>
<dbReference type="GO" id="GO:0008233">
    <property type="term" value="F:peptidase activity"/>
    <property type="evidence" value="ECO:0007669"/>
    <property type="project" value="InterPro"/>
</dbReference>
<dbReference type="GO" id="GO:0036402">
    <property type="term" value="F:proteasome-activating activity"/>
    <property type="evidence" value="ECO:0007669"/>
    <property type="project" value="UniProtKB-UniRule"/>
</dbReference>
<dbReference type="GO" id="GO:0043335">
    <property type="term" value="P:protein unfolding"/>
    <property type="evidence" value="ECO:0007669"/>
    <property type="project" value="UniProtKB-UniRule"/>
</dbReference>
<dbReference type="GO" id="GO:0051603">
    <property type="term" value="P:proteolysis involved in protein catabolic process"/>
    <property type="evidence" value="ECO:0007669"/>
    <property type="project" value="TreeGrafter"/>
</dbReference>
<dbReference type="CDD" id="cd19498">
    <property type="entry name" value="RecA-like_HslU"/>
    <property type="match status" value="1"/>
</dbReference>
<dbReference type="FunFam" id="3.40.50.300:FF:000213">
    <property type="entry name" value="ATP-dependent protease ATPase subunit HslU"/>
    <property type="match status" value="1"/>
</dbReference>
<dbReference type="FunFam" id="3.40.50.300:FF:000220">
    <property type="entry name" value="ATP-dependent protease ATPase subunit HslU"/>
    <property type="match status" value="1"/>
</dbReference>
<dbReference type="Gene3D" id="1.10.8.60">
    <property type="match status" value="1"/>
</dbReference>
<dbReference type="Gene3D" id="3.40.50.300">
    <property type="entry name" value="P-loop containing nucleotide triphosphate hydrolases"/>
    <property type="match status" value="2"/>
</dbReference>
<dbReference type="HAMAP" id="MF_00249">
    <property type="entry name" value="HslU"/>
    <property type="match status" value="1"/>
</dbReference>
<dbReference type="InterPro" id="IPR003593">
    <property type="entry name" value="AAA+_ATPase"/>
</dbReference>
<dbReference type="InterPro" id="IPR050052">
    <property type="entry name" value="ATP-dep_Clp_protease_ClpX"/>
</dbReference>
<dbReference type="InterPro" id="IPR003959">
    <property type="entry name" value="ATPase_AAA_core"/>
</dbReference>
<dbReference type="InterPro" id="IPR019489">
    <property type="entry name" value="Clp_ATPase_C"/>
</dbReference>
<dbReference type="InterPro" id="IPR004491">
    <property type="entry name" value="HslU"/>
</dbReference>
<dbReference type="InterPro" id="IPR027417">
    <property type="entry name" value="P-loop_NTPase"/>
</dbReference>
<dbReference type="NCBIfam" id="TIGR00390">
    <property type="entry name" value="hslU"/>
    <property type="match status" value="1"/>
</dbReference>
<dbReference type="NCBIfam" id="NF003544">
    <property type="entry name" value="PRK05201.1"/>
    <property type="match status" value="1"/>
</dbReference>
<dbReference type="PANTHER" id="PTHR48102">
    <property type="entry name" value="ATP-DEPENDENT CLP PROTEASE ATP-BINDING SUBUNIT CLPX-LIKE, MITOCHONDRIAL-RELATED"/>
    <property type="match status" value="1"/>
</dbReference>
<dbReference type="PANTHER" id="PTHR48102:SF3">
    <property type="entry name" value="ATP-DEPENDENT PROTEASE ATPASE SUBUNIT HSLU"/>
    <property type="match status" value="1"/>
</dbReference>
<dbReference type="Pfam" id="PF00004">
    <property type="entry name" value="AAA"/>
    <property type="match status" value="1"/>
</dbReference>
<dbReference type="Pfam" id="PF07724">
    <property type="entry name" value="AAA_2"/>
    <property type="match status" value="1"/>
</dbReference>
<dbReference type="Pfam" id="PF10431">
    <property type="entry name" value="ClpB_D2-small"/>
    <property type="match status" value="1"/>
</dbReference>
<dbReference type="SMART" id="SM00382">
    <property type="entry name" value="AAA"/>
    <property type="match status" value="1"/>
</dbReference>
<dbReference type="SMART" id="SM01086">
    <property type="entry name" value="ClpB_D2-small"/>
    <property type="match status" value="1"/>
</dbReference>
<dbReference type="SUPFAM" id="SSF52540">
    <property type="entry name" value="P-loop containing nucleoside triphosphate hydrolases"/>
    <property type="match status" value="1"/>
</dbReference>
<comment type="function">
    <text evidence="1">ATPase subunit of a proteasome-like degradation complex; this subunit has chaperone activity. The binding of ATP and its subsequent hydrolysis by HslU are essential for unfolding of protein substrates subsequently hydrolyzed by HslV. HslU recognizes the N-terminal part of its protein substrates and unfolds these before they are guided to HslV for hydrolysis.</text>
</comment>
<comment type="subunit">
    <text evidence="1">A double ring-shaped homohexamer of HslV is capped on each side by a ring-shaped HslU homohexamer. The assembly of the HslU/HslV complex is dependent on binding of ATP.</text>
</comment>
<comment type="subcellular location">
    <subcellularLocation>
        <location evidence="1">Cytoplasm</location>
    </subcellularLocation>
</comment>
<comment type="similarity">
    <text evidence="1">Belongs to the ClpX chaperone family. HslU subfamily.</text>
</comment>
<organism>
    <name type="scientific">Rhodopseudomonas palustris (strain ATCC BAA-98 / CGA009)</name>
    <dbReference type="NCBI Taxonomy" id="258594"/>
    <lineage>
        <taxon>Bacteria</taxon>
        <taxon>Pseudomonadati</taxon>
        <taxon>Pseudomonadota</taxon>
        <taxon>Alphaproteobacteria</taxon>
        <taxon>Hyphomicrobiales</taxon>
        <taxon>Nitrobacteraceae</taxon>
        <taxon>Rhodopseudomonas</taxon>
    </lineage>
</organism>
<gene>
    <name evidence="1" type="primary">hslU</name>
    <name type="ordered locus">RPA0306</name>
</gene>
<proteinExistence type="inferred from homology"/>
<reference key="1">
    <citation type="journal article" date="2004" name="Nat. Biotechnol.">
        <title>Complete genome sequence of the metabolically versatile photosynthetic bacterium Rhodopseudomonas palustris.</title>
        <authorList>
            <person name="Larimer F.W."/>
            <person name="Chain P."/>
            <person name="Hauser L."/>
            <person name="Lamerdin J.E."/>
            <person name="Malfatti S."/>
            <person name="Do L."/>
            <person name="Land M.L."/>
            <person name="Pelletier D.A."/>
            <person name="Beatty J.T."/>
            <person name="Lang A.S."/>
            <person name="Tabita F.R."/>
            <person name="Gibson J.L."/>
            <person name="Hanson T.E."/>
            <person name="Bobst C."/>
            <person name="Torres y Torres J.L."/>
            <person name="Peres C."/>
            <person name="Harrison F.H."/>
            <person name="Gibson J."/>
            <person name="Harwood C.S."/>
        </authorList>
    </citation>
    <scope>NUCLEOTIDE SEQUENCE [LARGE SCALE GENOMIC DNA]</scope>
    <source>
        <strain>ATCC BAA-98 / CGA009</strain>
    </source>
</reference>
<name>HSLU_RHOPA</name>
<sequence length="433" mass="47488">MTDFSPREIVSELDRFIVGQADAKRAVAIALRNRWRRLQLEGSLREEVLPKNILMIGPTGVGKTEIARRLAKLAGAPFLKVEATKFTEVGYVGRDVEQIIRDLVEVAIAQVREKKRKDVQARAQVAAEERVLDALVGPGSGPATRDSFRKKLRAGELNDKEIEIETQAGSGSPMFEIPGMPGAQIGAVSLGDIFGKMGGRTKKRRLTVADSHEILVNEEADKLLDTDQLVQEAIAAVENNGIVFLDEIDKICVRDGRSGGEVSREGVQRDLLPLIEGTTVSTKHGAVKTEHILFIASGAFHIAKPSDLLPELQGRLPIRVELNALSRDDMRRILTEPEASLIKQYVALMKTEGVTLDFSDDAIDALADVAVAVNSTVENIGARRLQTVMERVLDEISFVAPDRHGETFRVDADYVKTNVGDLAKNTDLSRFIL</sequence>